<gene>
    <name evidence="2" type="primary">ybiE</name>
    <name evidence="3" type="ordered locus">b4769</name>
</gene>
<comment type="induction">
    <text evidence="1">Expressed in both exponential and stationary phase in rich medium; expression is higher in stationary phase (at protein level).</text>
</comment>
<evidence type="ECO:0000269" key="1">
    <source>
    </source>
</evidence>
<evidence type="ECO:0000303" key="2">
    <source>
    </source>
</evidence>
<evidence type="ECO:0000312" key="3">
    <source>
        <dbReference type="EMBL" id="QNV50522.1"/>
    </source>
</evidence>
<name>YBIE_ECOLI</name>
<reference key="1">
    <citation type="journal article" date="1997" name="Science">
        <title>The complete genome sequence of Escherichia coli K-12.</title>
        <authorList>
            <person name="Blattner F.R."/>
            <person name="Plunkett G. III"/>
            <person name="Bloch C.A."/>
            <person name="Perna N.T."/>
            <person name="Burland V."/>
            <person name="Riley M."/>
            <person name="Collado-Vides J."/>
            <person name="Glasner J.D."/>
            <person name="Rode C.K."/>
            <person name="Mayhew G.F."/>
            <person name="Gregor J."/>
            <person name="Davis N.W."/>
            <person name="Kirkpatrick H.A."/>
            <person name="Goeden M.A."/>
            <person name="Rose D.J."/>
            <person name="Mau B."/>
            <person name="Shao Y."/>
        </authorList>
    </citation>
    <scope>NUCLEOTIDE SEQUENCE [LARGE SCALE GENOMIC DNA]</scope>
    <source>
        <strain>K12 / MG1655 / ATCC 47076</strain>
    </source>
</reference>
<reference key="2">
    <citation type="journal article" date="2019" name="MBio">
        <title>Identifying small proteins by ribosome profiling with stalled initiation complexes.</title>
        <authorList>
            <person name="Weaver J."/>
            <person name="Mohammad F."/>
            <person name="Buskirk A.R."/>
            <person name="Storz G."/>
        </authorList>
    </citation>
    <scope>IDENTIFICATION</scope>
    <scope>INDUCTION</scope>
    <source>
        <strain>K12 / MG1655 / ATCC 47076</strain>
    </source>
</reference>
<dbReference type="EMBL" id="U00096">
    <property type="protein sequence ID" value="QNV50522.1"/>
    <property type="molecule type" value="Genomic_DNA"/>
</dbReference>
<dbReference type="InParanoid" id="P0DSE7"/>
<dbReference type="BioCyc" id="EcoCyc:MONOMER0-4507"/>
<dbReference type="Proteomes" id="UP000000625">
    <property type="component" value="Chromosome"/>
</dbReference>
<accession>P0DSE7</accession>
<accession>A0A7H2C775</accession>
<organism>
    <name type="scientific">Escherichia coli (strain K12)</name>
    <dbReference type="NCBI Taxonomy" id="83333"/>
    <lineage>
        <taxon>Bacteria</taxon>
        <taxon>Pseudomonadati</taxon>
        <taxon>Pseudomonadota</taxon>
        <taxon>Gammaproteobacteria</taxon>
        <taxon>Enterobacterales</taxon>
        <taxon>Enterobacteriaceae</taxon>
        <taxon>Escherichia</taxon>
    </lineage>
</organism>
<protein>
    <recommendedName>
        <fullName evidence="2">Protein YbiE</fullName>
    </recommendedName>
</protein>
<proteinExistence type="evidence at protein level"/>
<sequence>MRLSANRQGNTCAGRSVNA</sequence>
<feature type="chain" id="PRO_0000447143" description="Protein YbiE">
    <location>
        <begin position="1"/>
        <end position="19"/>
    </location>
</feature>
<keyword id="KW-1185">Reference proteome</keyword>